<reference key="1">
    <citation type="journal article" date="2002" name="Proc. Natl. Acad. Sci. U.S.A.">
        <title>The complete genome sequence of Chlorobium tepidum TLS, a photosynthetic, anaerobic, green-sulfur bacterium.</title>
        <authorList>
            <person name="Eisen J.A."/>
            <person name="Nelson K.E."/>
            <person name="Paulsen I.T."/>
            <person name="Heidelberg J.F."/>
            <person name="Wu M."/>
            <person name="Dodson R.J."/>
            <person name="DeBoy R.T."/>
            <person name="Gwinn M.L."/>
            <person name="Nelson W.C."/>
            <person name="Haft D.H."/>
            <person name="Hickey E.K."/>
            <person name="Peterson J.D."/>
            <person name="Durkin A.S."/>
            <person name="Kolonay J.F."/>
            <person name="Yang F."/>
            <person name="Holt I.E."/>
            <person name="Umayam L.A."/>
            <person name="Mason T.M."/>
            <person name="Brenner M."/>
            <person name="Shea T.P."/>
            <person name="Parksey D.S."/>
            <person name="Nierman W.C."/>
            <person name="Feldblyum T.V."/>
            <person name="Hansen C.L."/>
            <person name="Craven M.B."/>
            <person name="Radune D."/>
            <person name="Vamathevan J.J."/>
            <person name="Khouri H.M."/>
            <person name="White O."/>
            <person name="Gruber T.M."/>
            <person name="Ketchum K.A."/>
            <person name="Venter J.C."/>
            <person name="Tettelin H."/>
            <person name="Bryant D.A."/>
            <person name="Fraser C.M."/>
        </authorList>
    </citation>
    <scope>NUCLEOTIDE SEQUENCE [LARGE SCALE GENOMIC DNA]</scope>
    <source>
        <strain>ATCC 49652 / DSM 12025 / NBRC 103806 / TLS</strain>
    </source>
</reference>
<protein>
    <recommendedName>
        <fullName evidence="1">7-cyano-7-deazaguanine synthase</fullName>
        <ecNumber evidence="1">6.3.4.20</ecNumber>
    </recommendedName>
    <alternativeName>
        <fullName evidence="1">7-cyano-7-carbaguanine synthase</fullName>
    </alternativeName>
    <alternativeName>
        <fullName evidence="1">PreQ(0) synthase</fullName>
    </alternativeName>
    <alternativeName>
        <fullName evidence="1">Queuosine biosynthesis protein QueC</fullName>
    </alternativeName>
</protein>
<organism>
    <name type="scientific">Chlorobaculum tepidum (strain ATCC 49652 / DSM 12025 / NBRC 103806 / TLS)</name>
    <name type="common">Chlorobium tepidum</name>
    <dbReference type="NCBI Taxonomy" id="194439"/>
    <lineage>
        <taxon>Bacteria</taxon>
        <taxon>Pseudomonadati</taxon>
        <taxon>Chlorobiota</taxon>
        <taxon>Chlorobiia</taxon>
        <taxon>Chlorobiales</taxon>
        <taxon>Chlorobiaceae</taxon>
        <taxon>Chlorobaculum</taxon>
    </lineage>
</organism>
<feature type="chain" id="PRO_0000246827" description="7-cyano-7-deazaguanine synthase">
    <location>
        <begin position="1"/>
        <end position="227"/>
    </location>
</feature>
<feature type="binding site" evidence="1">
    <location>
        <begin position="7"/>
        <end position="17"/>
    </location>
    <ligand>
        <name>ATP</name>
        <dbReference type="ChEBI" id="CHEBI:30616"/>
    </ligand>
</feature>
<feature type="binding site" evidence="1">
    <location>
        <position position="187"/>
    </location>
    <ligand>
        <name>Zn(2+)</name>
        <dbReference type="ChEBI" id="CHEBI:29105"/>
    </ligand>
</feature>
<feature type="binding site" evidence="1">
    <location>
        <position position="195"/>
    </location>
    <ligand>
        <name>Zn(2+)</name>
        <dbReference type="ChEBI" id="CHEBI:29105"/>
    </ligand>
</feature>
<feature type="binding site" evidence="1">
    <location>
        <position position="198"/>
    </location>
    <ligand>
        <name>Zn(2+)</name>
        <dbReference type="ChEBI" id="CHEBI:29105"/>
    </ligand>
</feature>
<feature type="binding site" evidence="1">
    <location>
        <position position="201"/>
    </location>
    <ligand>
        <name>Zn(2+)</name>
        <dbReference type="ChEBI" id="CHEBI:29105"/>
    </ligand>
</feature>
<keyword id="KW-0067">ATP-binding</keyword>
<keyword id="KW-0436">Ligase</keyword>
<keyword id="KW-0479">Metal-binding</keyword>
<keyword id="KW-0547">Nucleotide-binding</keyword>
<keyword id="KW-0671">Queuosine biosynthesis</keyword>
<keyword id="KW-1185">Reference proteome</keyword>
<keyword id="KW-0862">Zinc</keyword>
<proteinExistence type="inferred from homology"/>
<comment type="function">
    <text evidence="1">Catalyzes the ATP-dependent conversion of 7-carboxy-7-deazaguanine (CDG) to 7-cyano-7-deazaguanine (preQ(0)).</text>
</comment>
<comment type="catalytic activity">
    <reaction evidence="1">
        <text>7-carboxy-7-deazaguanine + NH4(+) + ATP = 7-cyano-7-deazaguanine + ADP + phosphate + H2O + H(+)</text>
        <dbReference type="Rhea" id="RHEA:27982"/>
        <dbReference type="ChEBI" id="CHEBI:15377"/>
        <dbReference type="ChEBI" id="CHEBI:15378"/>
        <dbReference type="ChEBI" id="CHEBI:28938"/>
        <dbReference type="ChEBI" id="CHEBI:30616"/>
        <dbReference type="ChEBI" id="CHEBI:43474"/>
        <dbReference type="ChEBI" id="CHEBI:45075"/>
        <dbReference type="ChEBI" id="CHEBI:61036"/>
        <dbReference type="ChEBI" id="CHEBI:456216"/>
        <dbReference type="EC" id="6.3.4.20"/>
    </reaction>
</comment>
<comment type="cofactor">
    <cofactor evidence="1">
        <name>Zn(2+)</name>
        <dbReference type="ChEBI" id="CHEBI:29105"/>
    </cofactor>
    <text evidence="1">Binds 1 zinc ion per subunit.</text>
</comment>
<comment type="pathway">
    <text evidence="1">Purine metabolism; 7-cyano-7-deazaguanine biosynthesis.</text>
</comment>
<comment type="similarity">
    <text evidence="1">Belongs to the QueC family.</text>
</comment>
<gene>
    <name evidence="1" type="primary">queC</name>
    <name type="ordered locus">CT0532</name>
</gene>
<name>QUEC_CHLTE</name>
<sequence>MRAVLLVSGGMDSLVATALAHREGLELAAMHVNYGQRTWQKELECFRQICVHYGIVDRLEVDAMFLSAIGGSSLTDATIPVGPADLAGTDIPTSYVPFRNANFLSMAVSWSEVIGANRIYIGAVEEDSSGYPDCRKVFYDAFNQVIEHGTRPETRIEIVTPLIAMSKAEIVRRGMELDAPFHFSWSCYKSEGKACGVCDSCARRLRAFASVGMDDPVEYEVRPNYLQ</sequence>
<evidence type="ECO:0000255" key="1">
    <source>
        <dbReference type="HAMAP-Rule" id="MF_01633"/>
    </source>
</evidence>
<dbReference type="EC" id="6.3.4.20" evidence="1"/>
<dbReference type="EMBL" id="AE006470">
    <property type="protein sequence ID" value="AAM71774.1"/>
    <property type="molecule type" value="Genomic_DNA"/>
</dbReference>
<dbReference type="RefSeq" id="NP_661432.1">
    <property type="nucleotide sequence ID" value="NC_002932.3"/>
</dbReference>
<dbReference type="RefSeq" id="WP_010932219.1">
    <property type="nucleotide sequence ID" value="NC_002932.3"/>
</dbReference>
<dbReference type="SMR" id="Q8KF00"/>
<dbReference type="STRING" id="194439.CT0532"/>
<dbReference type="EnsemblBacteria" id="AAM71774">
    <property type="protein sequence ID" value="AAM71774"/>
    <property type="gene ID" value="CT0532"/>
</dbReference>
<dbReference type="KEGG" id="cte:CT0532"/>
<dbReference type="PATRIC" id="fig|194439.7.peg.500"/>
<dbReference type="eggNOG" id="COG0603">
    <property type="taxonomic scope" value="Bacteria"/>
</dbReference>
<dbReference type="HOGENOM" id="CLU_081854_1_0_10"/>
<dbReference type="OrthoDB" id="9789567at2"/>
<dbReference type="UniPathway" id="UPA00391"/>
<dbReference type="Proteomes" id="UP000001007">
    <property type="component" value="Chromosome"/>
</dbReference>
<dbReference type="GO" id="GO:0005524">
    <property type="term" value="F:ATP binding"/>
    <property type="evidence" value="ECO:0007669"/>
    <property type="project" value="UniProtKB-UniRule"/>
</dbReference>
<dbReference type="GO" id="GO:0016879">
    <property type="term" value="F:ligase activity, forming carbon-nitrogen bonds"/>
    <property type="evidence" value="ECO:0007669"/>
    <property type="project" value="UniProtKB-UniRule"/>
</dbReference>
<dbReference type="GO" id="GO:0008270">
    <property type="term" value="F:zinc ion binding"/>
    <property type="evidence" value="ECO:0007669"/>
    <property type="project" value="UniProtKB-UniRule"/>
</dbReference>
<dbReference type="GO" id="GO:0008616">
    <property type="term" value="P:queuosine biosynthetic process"/>
    <property type="evidence" value="ECO:0007669"/>
    <property type="project" value="UniProtKB-UniRule"/>
</dbReference>
<dbReference type="CDD" id="cd01995">
    <property type="entry name" value="QueC-like"/>
    <property type="match status" value="1"/>
</dbReference>
<dbReference type="Gene3D" id="3.40.50.620">
    <property type="entry name" value="HUPs"/>
    <property type="match status" value="1"/>
</dbReference>
<dbReference type="HAMAP" id="MF_01633">
    <property type="entry name" value="QueC"/>
    <property type="match status" value="1"/>
</dbReference>
<dbReference type="InterPro" id="IPR018317">
    <property type="entry name" value="QueC"/>
</dbReference>
<dbReference type="InterPro" id="IPR014729">
    <property type="entry name" value="Rossmann-like_a/b/a_fold"/>
</dbReference>
<dbReference type="NCBIfam" id="TIGR00364">
    <property type="entry name" value="7-cyano-7-deazaguanine synthase QueC"/>
    <property type="match status" value="1"/>
</dbReference>
<dbReference type="PANTHER" id="PTHR42914">
    <property type="entry name" value="7-CYANO-7-DEAZAGUANINE SYNTHASE"/>
    <property type="match status" value="1"/>
</dbReference>
<dbReference type="PANTHER" id="PTHR42914:SF1">
    <property type="entry name" value="7-CYANO-7-DEAZAGUANINE SYNTHASE"/>
    <property type="match status" value="1"/>
</dbReference>
<dbReference type="Pfam" id="PF06508">
    <property type="entry name" value="QueC"/>
    <property type="match status" value="1"/>
</dbReference>
<dbReference type="PIRSF" id="PIRSF006293">
    <property type="entry name" value="ExsB"/>
    <property type="match status" value="1"/>
</dbReference>
<dbReference type="SUPFAM" id="SSF52402">
    <property type="entry name" value="Adenine nucleotide alpha hydrolases-like"/>
    <property type="match status" value="1"/>
</dbReference>
<accession>Q8KF00</accession>